<evidence type="ECO:0000250" key="1">
    <source>
        <dbReference type="UniProtKB" id="P14719"/>
    </source>
</evidence>
<evidence type="ECO:0000255" key="2"/>
<evidence type="ECO:0000255" key="3">
    <source>
        <dbReference type="PROSITE-ProRule" id="PRU00114"/>
    </source>
</evidence>
<evidence type="ECO:0000255" key="4">
    <source>
        <dbReference type="PROSITE-ProRule" id="PRU00204"/>
    </source>
</evidence>
<evidence type="ECO:0000269" key="5">
    <source>
    </source>
</evidence>
<evidence type="ECO:0000269" key="6">
    <source>
    </source>
</evidence>
<evidence type="ECO:0000269" key="7">
    <source>
    </source>
</evidence>
<evidence type="ECO:0000269" key="8">
    <source>
    </source>
</evidence>
<evidence type="ECO:0000269" key="9">
    <source>
    </source>
</evidence>
<evidence type="ECO:0000269" key="10">
    <source>
    </source>
</evidence>
<evidence type="ECO:0000269" key="11">
    <source>
    </source>
</evidence>
<evidence type="ECO:0000269" key="12">
    <source>
    </source>
</evidence>
<evidence type="ECO:0000269" key="13">
    <source>
    </source>
</evidence>
<evidence type="ECO:0000269" key="14">
    <source>
    </source>
</evidence>
<evidence type="ECO:0000303" key="15">
    <source>
    </source>
</evidence>
<evidence type="ECO:0000303" key="16">
    <source>
    </source>
</evidence>
<evidence type="ECO:0000303" key="17">
    <source>
    </source>
</evidence>
<evidence type="ECO:0000303" key="18">
    <source>
    </source>
</evidence>
<evidence type="ECO:0000305" key="19"/>
<evidence type="ECO:0000305" key="20">
    <source>
    </source>
</evidence>
<evidence type="ECO:0007829" key="21">
    <source>
        <dbReference type="PDB" id="4KC3"/>
    </source>
</evidence>
<accession>Q01638</accession>
<accession>A8K6B3</accession>
<accession>B4E0I3</accession>
<accession>Q53TU7</accession>
<accession>Q8NEJ3</accession>
<accession>Q9ULV7</accession>
<accession>Q9UQ44</accession>
<gene>
    <name type="primary">IL1RL1</name>
    <name type="synonym">DER4</name>
    <name type="synonym">ST2</name>
    <name type="synonym">T1</name>
</gene>
<name>ILRL1_HUMAN</name>
<feature type="signal peptide" evidence="9">
    <location>
        <begin position="1"/>
        <end position="18"/>
    </location>
</feature>
<feature type="chain" id="PRO_0000015442" description="Interleukin-1 receptor-like 1">
    <location>
        <begin position="19"/>
        <end position="556"/>
    </location>
</feature>
<feature type="topological domain" description="Extracellular" evidence="2">
    <location>
        <begin position="19"/>
        <end position="328"/>
    </location>
</feature>
<feature type="transmembrane region" description="Helical" evidence="2">
    <location>
        <begin position="329"/>
        <end position="349"/>
    </location>
</feature>
<feature type="topological domain" description="Cytoplasmic" evidence="2">
    <location>
        <begin position="350"/>
        <end position="556"/>
    </location>
</feature>
<feature type="domain" description="Ig-like C2-type 1">
    <location>
        <begin position="19"/>
        <end position="103"/>
    </location>
</feature>
<feature type="domain" description="Ig-like C2-type 2">
    <location>
        <begin position="114"/>
        <end position="197"/>
    </location>
</feature>
<feature type="domain" description="Ig-like C2-type 3">
    <location>
        <begin position="212"/>
        <end position="319"/>
    </location>
</feature>
<feature type="domain" description="TIR" evidence="4">
    <location>
        <begin position="375"/>
        <end position="535"/>
    </location>
</feature>
<feature type="region of interest" description="Flexible linker">
    <location>
        <begin position="198"/>
        <end position="211"/>
    </location>
</feature>
<feature type="active site" evidence="4">
    <location>
        <position position="461"/>
    </location>
</feature>
<feature type="glycosylation site" description="N-linked (GlcNAc...) asparagine" evidence="2">
    <location>
        <position position="54"/>
    </location>
</feature>
<feature type="glycosylation site" description="N-linked (GlcNAc...) asparagine" evidence="13">
    <location>
        <position position="95"/>
    </location>
</feature>
<feature type="glycosylation site" description="N-linked (GlcNAc...) asparagine" evidence="2">
    <location>
        <position position="101"/>
    </location>
</feature>
<feature type="glycosylation site" description="N-linked (GlcNAc...) asparagine" evidence="13">
    <location>
        <position position="140"/>
    </location>
</feature>
<feature type="glycosylation site" description="N-linked (GlcNAc...) asparagine" evidence="13">
    <location>
        <position position="191"/>
    </location>
</feature>
<feature type="glycosylation site" description="N-linked (GlcNAc...) asparagine" evidence="2">
    <location>
        <position position="232"/>
    </location>
</feature>
<feature type="glycosylation site" description="N-linked (GlcNAc...) asparagine" evidence="2">
    <location>
        <position position="254"/>
    </location>
</feature>
<feature type="glycosylation site" description="N-linked (GlcNAc...) asparagine" evidence="2">
    <location>
        <position position="273"/>
    </location>
</feature>
<feature type="disulfide bond" evidence="3 13">
    <location>
        <begin position="36"/>
        <end position="87"/>
    </location>
</feature>
<feature type="disulfide bond" evidence="3 13">
    <location>
        <begin position="111"/>
        <end position="151"/>
    </location>
</feature>
<feature type="disulfide bond" evidence="3 13">
    <location>
        <begin position="133"/>
        <end position="181"/>
    </location>
</feature>
<feature type="disulfide bond" evidence="3 13">
    <location>
        <begin position="235"/>
        <end position="303"/>
    </location>
</feature>
<feature type="disulfide bond" evidence="3 13">
    <location>
        <begin position="238"/>
        <end position="282"/>
    </location>
</feature>
<feature type="cross-link" description="Glycyl lysine isopeptide (Lys-Gly) (interchain with G-Cter in ubiquitin)" evidence="1">
    <location>
        <position position="321"/>
    </location>
</feature>
<feature type="splice variant" id="VSP_054933" description="In isoform 4." evidence="16">
    <location>
        <begin position="1"/>
        <end position="117"/>
    </location>
</feature>
<feature type="splice variant" id="VSP_002664" description="In isoform C." evidence="15">
    <original>DEQGFSLFPVIGAPAQNEIKEVEIGKNANLTCSACFGKGTQFLAAVLWQLNGTKIT</original>
    <variation>VWCQSFCKLKKSLIFSNTHWIQSLMRGFVMVYYGVHKCCRVVFNLCLQYFQHHQWP</variation>
    <location>
        <begin position="204"/>
        <end position="259"/>
    </location>
</feature>
<feature type="splice variant" id="VSP_002665" description="In isoform C." evidence="15">
    <location>
        <begin position="260"/>
        <end position="556"/>
    </location>
</feature>
<feature type="splice variant" id="VSP_002666" description="In isoform B and isoform 4." evidence="16 17 18">
    <original>IDHHS</original>
    <variation>SKECF</variation>
    <location>
        <begin position="324"/>
        <end position="328"/>
    </location>
</feature>
<feature type="splice variant" id="VSP_002667" description="In isoform B and isoform 4." evidence="16 17 18">
    <location>
        <begin position="329"/>
        <end position="556"/>
    </location>
</feature>
<feature type="sequence variant" id="VAR_023749" description="In dbSNP:rs1041973." evidence="5 6 8">
    <original>A</original>
    <variation>E</variation>
    <location>
        <position position="78"/>
    </location>
</feature>
<feature type="sequence variant" id="VAR_053373" description="In dbSNP:rs4988956." evidence="6">
    <original>A</original>
    <variation>T</variation>
    <location>
        <position position="433"/>
    </location>
</feature>
<feature type="sequence variant" id="VAR_053374" description="In dbSNP:rs10192036.">
    <original>Q</original>
    <variation>K</variation>
    <location>
        <position position="501"/>
    </location>
</feature>
<feature type="sequence variant" id="VAR_053375" description="In dbSNP:rs10204137.">
    <original>Q</original>
    <variation>R</variation>
    <location>
        <position position="501"/>
    </location>
</feature>
<feature type="sequence variant" id="VAR_053376" description="In dbSNP:rs10192157.">
    <original>T</original>
    <variation>I</variation>
    <location>
        <position position="549"/>
    </location>
</feature>
<feature type="sequence variant" id="VAR_053377" description="In dbSNP:rs10206753.">
    <original>L</original>
    <variation>S</variation>
    <location>
        <position position="551"/>
    </location>
</feature>
<feature type="sequence conflict" description="In Ref. 2; BAA85894." evidence="19" ref="2">
    <original>Q</original>
    <variation>R</variation>
    <location>
        <position position="70"/>
    </location>
</feature>
<feature type="strand" evidence="21">
    <location>
        <begin position="24"/>
        <end position="27"/>
    </location>
</feature>
<feature type="strand" evidence="21">
    <location>
        <begin position="32"/>
        <end position="35"/>
    </location>
</feature>
<feature type="strand" evidence="21">
    <location>
        <begin position="44"/>
        <end position="49"/>
    </location>
</feature>
<feature type="strand" evidence="21">
    <location>
        <begin position="63"/>
        <end position="68"/>
    </location>
</feature>
<feature type="strand" evidence="21">
    <location>
        <begin position="71"/>
        <end position="76"/>
    </location>
</feature>
<feature type="helix" evidence="21">
    <location>
        <begin position="79"/>
        <end position="81"/>
    </location>
</feature>
<feature type="strand" evidence="21">
    <location>
        <begin position="83"/>
        <end position="90"/>
    </location>
</feature>
<feature type="strand" evidence="21">
    <location>
        <begin position="95"/>
        <end position="105"/>
    </location>
</feature>
<feature type="strand" evidence="21">
    <location>
        <begin position="121"/>
        <end position="123"/>
    </location>
</feature>
<feature type="strand" evidence="21">
    <location>
        <begin position="125"/>
        <end position="127"/>
    </location>
</feature>
<feature type="strand" evidence="21">
    <location>
        <begin position="130"/>
        <end position="132"/>
    </location>
</feature>
<feature type="helix" evidence="21">
    <location>
        <begin position="136"/>
        <end position="138"/>
    </location>
</feature>
<feature type="strand" evidence="21">
    <location>
        <begin position="146"/>
        <end position="149"/>
    </location>
</feature>
<feature type="turn" evidence="21">
    <location>
        <begin position="156"/>
        <end position="158"/>
    </location>
</feature>
<feature type="strand" evidence="21">
    <location>
        <begin position="159"/>
        <end position="162"/>
    </location>
</feature>
<feature type="strand" evidence="21">
    <location>
        <begin position="165"/>
        <end position="170"/>
    </location>
</feature>
<feature type="helix" evidence="21">
    <location>
        <begin position="173"/>
        <end position="175"/>
    </location>
</feature>
<feature type="strand" evidence="21">
    <location>
        <begin position="177"/>
        <end position="189"/>
    </location>
</feature>
<feature type="strand" evidence="21">
    <location>
        <begin position="191"/>
        <end position="202"/>
    </location>
</feature>
<feature type="strand" evidence="21">
    <location>
        <begin position="209"/>
        <end position="216"/>
    </location>
</feature>
<feature type="strand" evidence="21">
    <location>
        <begin position="219"/>
        <end position="221"/>
    </location>
</feature>
<feature type="strand" evidence="21">
    <location>
        <begin position="234"/>
        <end position="242"/>
    </location>
</feature>
<feature type="strand" evidence="21">
    <location>
        <begin position="248"/>
        <end position="253"/>
    </location>
</feature>
<feature type="strand" evidence="21">
    <location>
        <begin position="265"/>
        <end position="269"/>
    </location>
</feature>
<feature type="strand" evidence="21">
    <location>
        <begin position="281"/>
        <end position="288"/>
    </location>
</feature>
<feature type="helix" evidence="21">
    <location>
        <begin position="295"/>
        <end position="297"/>
    </location>
</feature>
<feature type="strand" evidence="21">
    <location>
        <begin position="301"/>
        <end position="306"/>
    </location>
</feature>
<feature type="strand" evidence="21">
    <location>
        <begin position="311"/>
        <end position="317"/>
    </location>
</feature>
<dbReference type="EC" id="3.2.2.6" evidence="4"/>
<dbReference type="EMBL" id="D12763">
    <property type="protein sequence ID" value="BAA02233.1"/>
    <property type="molecule type" value="mRNA"/>
</dbReference>
<dbReference type="EMBL" id="D12764">
    <property type="protein sequence ID" value="BAA20539.1"/>
    <property type="molecule type" value="Genomic_DNA"/>
</dbReference>
<dbReference type="EMBL" id="AB029084">
    <property type="protein sequence ID" value="BAA85894.1"/>
    <property type="molecule type" value="mRNA"/>
</dbReference>
<dbReference type="EMBL" id="AB012701">
    <property type="protein sequence ID" value="BAA82405.2"/>
    <property type="molecule type" value="mRNA"/>
</dbReference>
<dbReference type="EMBL" id="AK291578">
    <property type="protein sequence ID" value="BAF84267.1"/>
    <property type="molecule type" value="mRNA"/>
</dbReference>
<dbReference type="EMBL" id="AK303389">
    <property type="protein sequence ID" value="BAG64445.1"/>
    <property type="molecule type" value="mRNA"/>
</dbReference>
<dbReference type="EMBL" id="AC007248">
    <property type="protein sequence ID" value="AAY15047.1"/>
    <property type="molecule type" value="Genomic_DNA"/>
</dbReference>
<dbReference type="EMBL" id="CH471127">
    <property type="protein sequence ID" value="EAX01795.1"/>
    <property type="molecule type" value="Genomic_DNA"/>
</dbReference>
<dbReference type="EMBL" id="BC030975">
    <property type="protein sequence ID" value="AAH30975.1"/>
    <property type="molecule type" value="mRNA"/>
</dbReference>
<dbReference type="CCDS" id="CCDS2057.1">
    <molecule id="Q01638-1"/>
</dbReference>
<dbReference type="CCDS" id="CCDS2058.1">
    <molecule id="Q01638-2"/>
</dbReference>
<dbReference type="CCDS" id="CCDS74548.1">
    <molecule id="Q01638-4"/>
</dbReference>
<dbReference type="PIR" id="JC7109">
    <property type="entry name" value="JC7109"/>
</dbReference>
<dbReference type="PIR" id="S30444">
    <property type="entry name" value="S30444"/>
</dbReference>
<dbReference type="RefSeq" id="NP_001269337.1">
    <molecule id="Q01638-4"/>
    <property type="nucleotide sequence ID" value="NM_001282408.2"/>
</dbReference>
<dbReference type="RefSeq" id="NP_003847.2">
    <molecule id="Q01638-2"/>
    <property type="nucleotide sequence ID" value="NM_003856.3"/>
</dbReference>
<dbReference type="RefSeq" id="NP_057316.3">
    <molecule id="Q01638-1"/>
    <property type="nucleotide sequence ID" value="NM_016232.4"/>
</dbReference>
<dbReference type="RefSeq" id="XP_006712902.1">
    <molecule id="Q01638-1"/>
    <property type="nucleotide sequence ID" value="XM_006712839.4"/>
</dbReference>
<dbReference type="RefSeq" id="XP_011510453.1">
    <molecule id="Q01638-2"/>
    <property type="nucleotide sequence ID" value="XM_011512151.2"/>
</dbReference>
<dbReference type="RefSeq" id="XP_054200480.1">
    <molecule id="Q01638-2"/>
    <property type="nucleotide sequence ID" value="XM_054344505.1"/>
</dbReference>
<dbReference type="RefSeq" id="XP_054200481.1">
    <molecule id="Q01638-1"/>
    <property type="nucleotide sequence ID" value="XM_054344506.1"/>
</dbReference>
<dbReference type="PDB" id="4KC3">
    <property type="method" value="X-ray"/>
    <property type="resolution" value="3.27 A"/>
    <property type="chains" value="B=19-321"/>
</dbReference>
<dbReference type="PDBsum" id="4KC3"/>
<dbReference type="SMR" id="Q01638"/>
<dbReference type="BioGRID" id="114613">
    <property type="interactions" value="21"/>
</dbReference>
<dbReference type="ComplexPortal" id="CPX-10322">
    <property type="entry name" value="IL33 receptor-ligand complex"/>
</dbReference>
<dbReference type="ComplexPortal" id="CPX-10324">
    <molecule id="Q01638-2"/>
    <property type="entry name" value="IL33-IL1RL1 decoy complex"/>
</dbReference>
<dbReference type="CORUM" id="Q01638"/>
<dbReference type="DIP" id="DIP-37861N"/>
<dbReference type="FunCoup" id="Q01638">
    <property type="interactions" value="365"/>
</dbReference>
<dbReference type="IntAct" id="Q01638">
    <property type="interactions" value="17"/>
</dbReference>
<dbReference type="STRING" id="9606.ENSP00000233954"/>
<dbReference type="ChEMBL" id="CHEMBL4804256"/>
<dbReference type="GlyConnect" id="1948">
    <property type="glycosylation" value="10 N-Linked glycans (5 sites)"/>
</dbReference>
<dbReference type="GlyCosmos" id="Q01638">
    <property type="glycosylation" value="8 sites, 10 glycans"/>
</dbReference>
<dbReference type="GlyGen" id="Q01638">
    <property type="glycosylation" value="8 sites, 11 N-linked glycans (5 sites)"/>
</dbReference>
<dbReference type="iPTMnet" id="Q01638"/>
<dbReference type="PhosphoSitePlus" id="Q01638"/>
<dbReference type="BioMuta" id="IL1RL1"/>
<dbReference type="DMDM" id="116242527"/>
<dbReference type="jPOST" id="Q01638"/>
<dbReference type="MassIVE" id="Q01638"/>
<dbReference type="PaxDb" id="9606-ENSP00000233954"/>
<dbReference type="PeptideAtlas" id="Q01638"/>
<dbReference type="ProteomicsDB" id="57975">
    <molecule id="Q01638-1"/>
</dbReference>
<dbReference type="ProteomicsDB" id="57976">
    <molecule id="Q01638-2"/>
</dbReference>
<dbReference type="ProteomicsDB" id="57977">
    <molecule id="Q01638-3"/>
</dbReference>
<dbReference type="Pumba" id="Q01638"/>
<dbReference type="TopDownProteomics" id="Q01638-2">
    <molecule id="Q01638-2"/>
</dbReference>
<dbReference type="ABCD" id="Q01638">
    <property type="antibodies" value="14 sequenced antibodies"/>
</dbReference>
<dbReference type="Antibodypedia" id="2362">
    <property type="antibodies" value="714 antibodies from 41 providers"/>
</dbReference>
<dbReference type="DNASU" id="9173"/>
<dbReference type="Ensembl" id="ENST00000233954.6">
    <molecule id="Q01638-1"/>
    <property type="protein sequence ID" value="ENSP00000233954.1"/>
    <property type="gene ID" value="ENSG00000115602.17"/>
</dbReference>
<dbReference type="Ensembl" id="ENST00000311734.6">
    <molecule id="Q01638-2"/>
    <property type="protein sequence ID" value="ENSP00000310371.2"/>
    <property type="gene ID" value="ENSG00000115602.17"/>
</dbReference>
<dbReference type="Ensembl" id="ENST00000404917.6">
    <molecule id="Q01638-4"/>
    <property type="protein sequence ID" value="ENSP00000384822.2"/>
    <property type="gene ID" value="ENSG00000115602.17"/>
</dbReference>
<dbReference type="Ensembl" id="ENST00000427077.1">
    <molecule id="Q01638-3"/>
    <property type="protein sequence ID" value="ENSP00000391120.1"/>
    <property type="gene ID" value="ENSG00000115602.17"/>
</dbReference>
<dbReference type="GeneID" id="9173"/>
<dbReference type="KEGG" id="hsa:9173"/>
<dbReference type="MANE-Select" id="ENST00000233954.6">
    <property type="protein sequence ID" value="ENSP00000233954.1"/>
    <property type="RefSeq nucleotide sequence ID" value="NM_016232.5"/>
    <property type="RefSeq protein sequence ID" value="NP_057316.3"/>
</dbReference>
<dbReference type="UCSC" id="uc002tbu.1">
    <molecule id="Q01638-1"/>
    <property type="organism name" value="human"/>
</dbReference>
<dbReference type="AGR" id="HGNC:5998"/>
<dbReference type="CTD" id="9173"/>
<dbReference type="DisGeNET" id="9173"/>
<dbReference type="GeneCards" id="IL1RL1"/>
<dbReference type="HGNC" id="HGNC:5998">
    <property type="gene designation" value="IL1RL1"/>
</dbReference>
<dbReference type="HPA" id="ENSG00000115602">
    <property type="expression patterns" value="Group enriched (choroid plexus, kidney, lung, placenta)"/>
</dbReference>
<dbReference type="MIM" id="601203">
    <property type="type" value="gene"/>
</dbReference>
<dbReference type="neXtProt" id="NX_Q01638"/>
<dbReference type="OpenTargets" id="ENSG00000115602"/>
<dbReference type="PharmGKB" id="PA29814"/>
<dbReference type="VEuPathDB" id="HostDB:ENSG00000115602"/>
<dbReference type="eggNOG" id="ENOG502RU6H">
    <property type="taxonomic scope" value="Eukaryota"/>
</dbReference>
<dbReference type="GeneTree" id="ENSGT01090000259985"/>
<dbReference type="HOGENOM" id="CLU_025552_3_1_1"/>
<dbReference type="InParanoid" id="Q01638"/>
<dbReference type="OMA" id="HQSTYYI"/>
<dbReference type="OrthoDB" id="6132459at2759"/>
<dbReference type="PAN-GO" id="Q01638">
    <property type="GO annotations" value="2 GO annotations based on evolutionary models"/>
</dbReference>
<dbReference type="PhylomeDB" id="Q01638"/>
<dbReference type="TreeFam" id="TF325519"/>
<dbReference type="PathwayCommons" id="Q01638"/>
<dbReference type="Reactome" id="R-HSA-1257604">
    <property type="pathway name" value="PIP3 activates AKT signaling"/>
</dbReference>
<dbReference type="Reactome" id="R-HSA-6811558">
    <property type="pathway name" value="PI5P, PP2A and IER3 Regulate PI3K/AKT Signaling"/>
</dbReference>
<dbReference type="Reactome" id="R-HSA-9014843">
    <molecule id="Q01638-2"/>
    <property type="pathway name" value="Interleukin-33 signaling"/>
</dbReference>
<dbReference type="SignaLink" id="Q01638"/>
<dbReference type="SIGNOR" id="Q01638"/>
<dbReference type="BioGRID-ORCS" id="9173">
    <property type="hits" value="10 hits in 1147 CRISPR screens"/>
</dbReference>
<dbReference type="EvolutionaryTrace" id="Q01638"/>
<dbReference type="GeneWiki" id="IL1RL1"/>
<dbReference type="GenomeRNAi" id="9173"/>
<dbReference type="Pharos" id="Q01638">
    <property type="development level" value="Tbio"/>
</dbReference>
<dbReference type="PRO" id="PR:Q01638"/>
<dbReference type="Proteomes" id="UP000005640">
    <property type="component" value="Chromosome 2"/>
</dbReference>
<dbReference type="RNAct" id="Q01638">
    <property type="molecule type" value="protein"/>
</dbReference>
<dbReference type="Bgee" id="ENSG00000115602">
    <property type="expression patterns" value="Expressed in upper lobe of left lung and 136 other cell types or tissues"/>
</dbReference>
<dbReference type="ExpressionAtlas" id="Q01638">
    <property type="expression patterns" value="baseline and differential"/>
</dbReference>
<dbReference type="GO" id="GO:0009986">
    <property type="term" value="C:cell surface"/>
    <property type="evidence" value="ECO:0000318"/>
    <property type="project" value="GO_Central"/>
</dbReference>
<dbReference type="GO" id="GO:0005829">
    <property type="term" value="C:cytosol"/>
    <property type="evidence" value="ECO:0000314"/>
    <property type="project" value="HPA"/>
</dbReference>
<dbReference type="GO" id="GO:0009897">
    <property type="term" value="C:external side of plasma membrane"/>
    <property type="evidence" value="ECO:0007669"/>
    <property type="project" value="Ensembl"/>
</dbReference>
<dbReference type="GO" id="GO:0005576">
    <property type="term" value="C:extracellular region"/>
    <property type="evidence" value="ECO:0007669"/>
    <property type="project" value="UniProtKB-SubCell"/>
</dbReference>
<dbReference type="GO" id="GO:0005925">
    <property type="term" value="C:focal adhesion"/>
    <property type="evidence" value="ECO:0000314"/>
    <property type="project" value="HPA"/>
</dbReference>
<dbReference type="GO" id="GO:0005886">
    <property type="term" value="C:plasma membrane"/>
    <property type="evidence" value="ECO:0000314"/>
    <property type="project" value="HPA"/>
</dbReference>
<dbReference type="GO" id="GO:0004896">
    <property type="term" value="F:cytokine receptor activity"/>
    <property type="evidence" value="ECO:0000304"/>
    <property type="project" value="UniProtKB"/>
</dbReference>
<dbReference type="GO" id="GO:0004908">
    <property type="term" value="F:interleukin-1 receptor activity"/>
    <property type="evidence" value="ECO:0007669"/>
    <property type="project" value="InterPro"/>
</dbReference>
<dbReference type="GO" id="GO:0002113">
    <property type="term" value="F:interleukin-33 binding"/>
    <property type="evidence" value="ECO:0000318"/>
    <property type="project" value="GO_Central"/>
</dbReference>
<dbReference type="GO" id="GO:0002114">
    <property type="term" value="F:interleukin-33 receptor activity"/>
    <property type="evidence" value="ECO:0000314"/>
    <property type="project" value="UniProt"/>
</dbReference>
<dbReference type="GO" id="GO:0061809">
    <property type="term" value="F:NAD+ nucleosidase activity, cyclic ADP-ribose generating"/>
    <property type="evidence" value="ECO:0007669"/>
    <property type="project" value="UniProtKB-EC"/>
</dbReference>
<dbReference type="GO" id="GO:0006955">
    <property type="term" value="P:immune response"/>
    <property type="evidence" value="ECO:0000303"/>
    <property type="project" value="UniProtKB"/>
</dbReference>
<dbReference type="GO" id="GO:0006954">
    <property type="term" value="P:inflammatory response"/>
    <property type="evidence" value="ECO:0000250"/>
    <property type="project" value="UniProtKB"/>
</dbReference>
<dbReference type="GO" id="GO:0038172">
    <property type="term" value="P:interleukin-33-mediated signaling pathway"/>
    <property type="evidence" value="ECO:0000314"/>
    <property type="project" value="UniProt"/>
</dbReference>
<dbReference type="GO" id="GO:0030225">
    <property type="term" value="P:macrophage differentiation"/>
    <property type="evidence" value="ECO:0000250"/>
    <property type="project" value="UniProtKB"/>
</dbReference>
<dbReference type="GO" id="GO:0002826">
    <property type="term" value="P:negative regulation of T-helper 1 type immune response"/>
    <property type="evidence" value="ECO:0007669"/>
    <property type="project" value="Ensembl"/>
</dbReference>
<dbReference type="GO" id="GO:0032689">
    <property type="term" value="P:negative regulation of type II interferon production"/>
    <property type="evidence" value="ECO:0007669"/>
    <property type="project" value="Ensembl"/>
</dbReference>
<dbReference type="GO" id="GO:0032722">
    <property type="term" value="P:positive regulation of chemokine production"/>
    <property type="evidence" value="ECO:0007669"/>
    <property type="project" value="Ensembl"/>
</dbReference>
<dbReference type="GO" id="GO:0050729">
    <property type="term" value="P:positive regulation of inflammatory response"/>
    <property type="evidence" value="ECO:0007669"/>
    <property type="project" value="Ensembl"/>
</dbReference>
<dbReference type="GO" id="GO:0032754">
    <property type="term" value="P:positive regulation of interleukin-5 production"/>
    <property type="evidence" value="ECO:0007669"/>
    <property type="project" value="Ensembl"/>
</dbReference>
<dbReference type="GO" id="GO:0043032">
    <property type="term" value="P:positive regulation of macrophage activation"/>
    <property type="evidence" value="ECO:0007669"/>
    <property type="project" value="Ensembl"/>
</dbReference>
<dbReference type="GO" id="GO:0009611">
    <property type="term" value="P:response to wounding"/>
    <property type="evidence" value="ECO:0007669"/>
    <property type="project" value="Ensembl"/>
</dbReference>
<dbReference type="GO" id="GO:0007165">
    <property type="term" value="P:signal transduction"/>
    <property type="evidence" value="ECO:0000304"/>
    <property type="project" value="ProtInc"/>
</dbReference>
<dbReference type="CDD" id="cd05757">
    <property type="entry name" value="Ig2_IL1R-like"/>
    <property type="match status" value="1"/>
</dbReference>
<dbReference type="FunFam" id="3.40.50.10140:FF:000002">
    <property type="entry name" value="Interleukin 1 receptor accessory protein"/>
    <property type="match status" value="1"/>
</dbReference>
<dbReference type="FunFam" id="2.60.40.10:FF:000188">
    <property type="entry name" value="Interleukin-1 receptor accessory protein-like 1"/>
    <property type="match status" value="1"/>
</dbReference>
<dbReference type="FunFam" id="2.60.40.10:FF:000284">
    <property type="entry name" value="interleukin-1 receptor accessory protein-like 1"/>
    <property type="match status" value="1"/>
</dbReference>
<dbReference type="FunFam" id="2.60.40.10:FF:001471">
    <property type="entry name" value="interleukin-1 receptor-like 1 isoform X3"/>
    <property type="match status" value="1"/>
</dbReference>
<dbReference type="Gene3D" id="2.60.40.10">
    <property type="entry name" value="Immunoglobulins"/>
    <property type="match status" value="3"/>
</dbReference>
<dbReference type="Gene3D" id="3.40.50.10140">
    <property type="entry name" value="Toll/interleukin-1 receptor homology (TIR) domain"/>
    <property type="match status" value="1"/>
</dbReference>
<dbReference type="InterPro" id="IPR007110">
    <property type="entry name" value="Ig-like_dom"/>
</dbReference>
<dbReference type="InterPro" id="IPR036179">
    <property type="entry name" value="Ig-like_dom_sf"/>
</dbReference>
<dbReference type="InterPro" id="IPR013783">
    <property type="entry name" value="Ig-like_fold"/>
</dbReference>
<dbReference type="InterPro" id="IPR013098">
    <property type="entry name" value="Ig_I-set"/>
</dbReference>
<dbReference type="InterPro" id="IPR003599">
    <property type="entry name" value="Ig_sub"/>
</dbReference>
<dbReference type="InterPro" id="IPR003598">
    <property type="entry name" value="Ig_sub2"/>
</dbReference>
<dbReference type="InterPro" id="IPR015621">
    <property type="entry name" value="IL-1_rcpt_fam"/>
</dbReference>
<dbReference type="InterPro" id="IPR004074">
    <property type="entry name" value="IL-1_rcpt_I/II-typ"/>
</dbReference>
<dbReference type="InterPro" id="IPR000157">
    <property type="entry name" value="TIR_dom"/>
</dbReference>
<dbReference type="InterPro" id="IPR035897">
    <property type="entry name" value="Toll_tir_struct_dom_sf"/>
</dbReference>
<dbReference type="PANTHER" id="PTHR11890">
    <property type="entry name" value="INTERLEUKIN-1 RECEPTOR FAMILY MEMBER"/>
    <property type="match status" value="1"/>
</dbReference>
<dbReference type="PANTHER" id="PTHR11890:SF7">
    <property type="entry name" value="INTERLEUKIN-1 RECEPTOR-LIKE 1"/>
    <property type="match status" value="1"/>
</dbReference>
<dbReference type="Pfam" id="PF07679">
    <property type="entry name" value="I-set"/>
    <property type="match status" value="1"/>
</dbReference>
<dbReference type="Pfam" id="PF01582">
    <property type="entry name" value="TIR"/>
    <property type="match status" value="1"/>
</dbReference>
<dbReference type="PRINTS" id="PR01536">
    <property type="entry name" value="INTRLKN1R12F"/>
</dbReference>
<dbReference type="PRINTS" id="PR01537">
    <property type="entry name" value="INTRLKN1R1F"/>
</dbReference>
<dbReference type="SMART" id="SM00409">
    <property type="entry name" value="IG"/>
    <property type="match status" value="3"/>
</dbReference>
<dbReference type="SMART" id="SM00408">
    <property type="entry name" value="IGc2"/>
    <property type="match status" value="2"/>
</dbReference>
<dbReference type="SMART" id="SM00255">
    <property type="entry name" value="TIR"/>
    <property type="match status" value="1"/>
</dbReference>
<dbReference type="SUPFAM" id="SSF48726">
    <property type="entry name" value="Immunoglobulin"/>
    <property type="match status" value="3"/>
</dbReference>
<dbReference type="SUPFAM" id="SSF52200">
    <property type="entry name" value="Toll/Interleukin receptor TIR domain"/>
    <property type="match status" value="1"/>
</dbReference>
<dbReference type="PROSITE" id="PS50835">
    <property type="entry name" value="IG_LIKE"/>
    <property type="match status" value="3"/>
</dbReference>
<dbReference type="PROSITE" id="PS50104">
    <property type="entry name" value="TIR"/>
    <property type="match status" value="1"/>
</dbReference>
<reference key="1">
    <citation type="journal article" date="1992" name="Biochim. Biophys. Acta">
        <title>Nucleotide sequence of a complementary DNA for human ST2.</title>
        <authorList>
            <person name="Tominaga S."/>
            <person name="Yokota T."/>
            <person name="Yanagisawa K."/>
            <person name="Tsukamoto T."/>
            <person name="Takagi T."/>
            <person name="Tetsuka T."/>
        </authorList>
    </citation>
    <scope>NUCLEOTIDE SEQUENCE [GENOMIC DNA / MRNA] (ISOFORM B)</scope>
    <scope>VARIANT GLU-78</scope>
    <source>
        <tissue>Lymphocyte</tissue>
    </source>
</reference>
<reference key="2">
    <citation type="journal article" date="1999" name="Biochem. Biophys. Res. Commun.">
        <title>Presence and expression of a novel variant form of ST2 gene product in human leukemic cell line UT-7/GM.</title>
        <authorList>
            <person name="Tominaga S."/>
            <person name="Kuroiwa K."/>
            <person name="Tago K."/>
            <person name="Iwahana H."/>
            <person name="Yanagisawa K."/>
            <person name="Komatsu N."/>
        </authorList>
    </citation>
    <scope>NUCLEOTIDE SEQUENCE [MRNA] (ISOFORM C)</scope>
    <scope>VARIANT GLU-78</scope>
</reference>
<reference key="3">
    <citation type="journal article" date="2000" name="Genomics">
        <title>The cloning and nucleotide sequence of human ST2L cDNA.</title>
        <authorList>
            <person name="Li H."/>
            <person name="Tago K."/>
            <person name="Io K."/>
            <person name="Kuroiwa K."/>
            <person name="Arai T."/>
            <person name="Iwahana H."/>
            <person name="Tominaga S."/>
            <person name="Yanagisawa K."/>
        </authorList>
    </citation>
    <scope>NUCLEOTIDE SEQUENCE [MRNA] (ISOFORM A)</scope>
    <scope>VARIANTS GLU-78 AND THR-433</scope>
    <source>
        <tissue>Megakaryoblast</tissue>
    </source>
</reference>
<reference key="4">
    <citation type="submission" date="2001-06" db="EMBL/GenBank/DDBJ databases">
        <authorList>
            <person name="Yanagisawa K."/>
        </authorList>
    </citation>
    <scope>SEQUENCE REVISION TO 433</scope>
</reference>
<reference key="5">
    <citation type="journal article" date="2004" name="Nat. Genet.">
        <title>Complete sequencing and characterization of 21,243 full-length human cDNAs.</title>
        <authorList>
            <person name="Ota T."/>
            <person name="Suzuki Y."/>
            <person name="Nishikawa T."/>
            <person name="Otsuki T."/>
            <person name="Sugiyama T."/>
            <person name="Irie R."/>
            <person name="Wakamatsu A."/>
            <person name="Hayashi K."/>
            <person name="Sato H."/>
            <person name="Nagai K."/>
            <person name="Kimura K."/>
            <person name="Makita H."/>
            <person name="Sekine M."/>
            <person name="Obayashi M."/>
            <person name="Nishi T."/>
            <person name="Shibahara T."/>
            <person name="Tanaka T."/>
            <person name="Ishii S."/>
            <person name="Yamamoto J."/>
            <person name="Saito K."/>
            <person name="Kawai Y."/>
            <person name="Isono Y."/>
            <person name="Nakamura Y."/>
            <person name="Nagahari K."/>
            <person name="Murakami K."/>
            <person name="Yasuda T."/>
            <person name="Iwayanagi T."/>
            <person name="Wagatsuma M."/>
            <person name="Shiratori A."/>
            <person name="Sudo H."/>
            <person name="Hosoiri T."/>
            <person name="Kaku Y."/>
            <person name="Kodaira H."/>
            <person name="Kondo H."/>
            <person name="Sugawara M."/>
            <person name="Takahashi M."/>
            <person name="Kanda K."/>
            <person name="Yokoi T."/>
            <person name="Furuya T."/>
            <person name="Kikkawa E."/>
            <person name="Omura Y."/>
            <person name="Abe K."/>
            <person name="Kamihara K."/>
            <person name="Katsuta N."/>
            <person name="Sato K."/>
            <person name="Tanikawa M."/>
            <person name="Yamazaki M."/>
            <person name="Ninomiya K."/>
            <person name="Ishibashi T."/>
            <person name="Yamashita H."/>
            <person name="Murakawa K."/>
            <person name="Fujimori K."/>
            <person name="Tanai H."/>
            <person name="Kimata M."/>
            <person name="Watanabe M."/>
            <person name="Hiraoka S."/>
            <person name="Chiba Y."/>
            <person name="Ishida S."/>
            <person name="Ono Y."/>
            <person name="Takiguchi S."/>
            <person name="Watanabe S."/>
            <person name="Yosida M."/>
            <person name="Hotuta T."/>
            <person name="Kusano J."/>
            <person name="Kanehori K."/>
            <person name="Takahashi-Fujii A."/>
            <person name="Hara H."/>
            <person name="Tanase T.-O."/>
            <person name="Nomura Y."/>
            <person name="Togiya S."/>
            <person name="Komai F."/>
            <person name="Hara R."/>
            <person name="Takeuchi K."/>
            <person name="Arita M."/>
            <person name="Imose N."/>
            <person name="Musashino K."/>
            <person name="Yuuki H."/>
            <person name="Oshima A."/>
            <person name="Sasaki N."/>
            <person name="Aotsuka S."/>
            <person name="Yoshikawa Y."/>
            <person name="Matsunawa H."/>
            <person name="Ichihara T."/>
            <person name="Shiohata N."/>
            <person name="Sano S."/>
            <person name="Moriya S."/>
            <person name="Momiyama H."/>
            <person name="Satoh N."/>
            <person name="Takami S."/>
            <person name="Terashima Y."/>
            <person name="Suzuki O."/>
            <person name="Nakagawa S."/>
            <person name="Senoh A."/>
            <person name="Mizoguchi H."/>
            <person name="Goto Y."/>
            <person name="Shimizu F."/>
            <person name="Wakebe H."/>
            <person name="Hishigaki H."/>
            <person name="Watanabe T."/>
            <person name="Sugiyama A."/>
            <person name="Takemoto M."/>
            <person name="Kawakami B."/>
            <person name="Yamazaki M."/>
            <person name="Watanabe K."/>
            <person name="Kumagai A."/>
            <person name="Itakura S."/>
            <person name="Fukuzumi Y."/>
            <person name="Fujimori Y."/>
            <person name="Komiyama M."/>
            <person name="Tashiro H."/>
            <person name="Tanigami A."/>
            <person name="Fujiwara T."/>
            <person name="Ono T."/>
            <person name="Yamada K."/>
            <person name="Fujii Y."/>
            <person name="Ozaki K."/>
            <person name="Hirao M."/>
            <person name="Ohmori Y."/>
            <person name="Kawabata A."/>
            <person name="Hikiji T."/>
            <person name="Kobatake N."/>
            <person name="Inagaki H."/>
            <person name="Ikema Y."/>
            <person name="Okamoto S."/>
            <person name="Okitani R."/>
            <person name="Kawakami T."/>
            <person name="Noguchi S."/>
            <person name="Itoh T."/>
            <person name="Shigeta K."/>
            <person name="Senba T."/>
            <person name="Matsumura K."/>
            <person name="Nakajima Y."/>
            <person name="Mizuno T."/>
            <person name="Morinaga M."/>
            <person name="Sasaki M."/>
            <person name="Togashi T."/>
            <person name="Oyama M."/>
            <person name="Hata H."/>
            <person name="Watanabe M."/>
            <person name="Komatsu T."/>
            <person name="Mizushima-Sugano J."/>
            <person name="Satoh T."/>
            <person name="Shirai Y."/>
            <person name="Takahashi Y."/>
            <person name="Nakagawa K."/>
            <person name="Okumura K."/>
            <person name="Nagase T."/>
            <person name="Nomura N."/>
            <person name="Kikuchi H."/>
            <person name="Masuho Y."/>
            <person name="Yamashita R."/>
            <person name="Nakai K."/>
            <person name="Yada T."/>
            <person name="Nakamura Y."/>
            <person name="Ohara O."/>
            <person name="Isogai T."/>
            <person name="Sugano S."/>
        </authorList>
    </citation>
    <scope>NUCLEOTIDE SEQUENCE [LARGE SCALE MRNA] (ISOFORMS B AND 4)</scope>
    <source>
        <tissue>Placenta</tissue>
        <tissue>Thymus</tissue>
    </source>
</reference>
<reference key="6">
    <citation type="journal article" date="2005" name="Nature">
        <title>Generation and annotation of the DNA sequences of human chromosomes 2 and 4.</title>
        <authorList>
            <person name="Hillier L.W."/>
            <person name="Graves T.A."/>
            <person name="Fulton R.S."/>
            <person name="Fulton L.A."/>
            <person name="Pepin K.H."/>
            <person name="Minx P."/>
            <person name="Wagner-McPherson C."/>
            <person name="Layman D."/>
            <person name="Wylie K."/>
            <person name="Sekhon M."/>
            <person name="Becker M.C."/>
            <person name="Fewell G.A."/>
            <person name="Delehaunty K.D."/>
            <person name="Miner T.L."/>
            <person name="Nash W.E."/>
            <person name="Kremitzki C."/>
            <person name="Oddy L."/>
            <person name="Du H."/>
            <person name="Sun H."/>
            <person name="Bradshaw-Cordum H."/>
            <person name="Ali J."/>
            <person name="Carter J."/>
            <person name="Cordes M."/>
            <person name="Harris A."/>
            <person name="Isak A."/>
            <person name="van Brunt A."/>
            <person name="Nguyen C."/>
            <person name="Du F."/>
            <person name="Courtney L."/>
            <person name="Kalicki J."/>
            <person name="Ozersky P."/>
            <person name="Abbott S."/>
            <person name="Armstrong J."/>
            <person name="Belter E.A."/>
            <person name="Caruso L."/>
            <person name="Cedroni M."/>
            <person name="Cotton M."/>
            <person name="Davidson T."/>
            <person name="Desai A."/>
            <person name="Elliott G."/>
            <person name="Erb T."/>
            <person name="Fronick C."/>
            <person name="Gaige T."/>
            <person name="Haakenson W."/>
            <person name="Haglund K."/>
            <person name="Holmes A."/>
            <person name="Harkins R."/>
            <person name="Kim K."/>
            <person name="Kruchowski S.S."/>
            <person name="Strong C.M."/>
            <person name="Grewal N."/>
            <person name="Goyea E."/>
            <person name="Hou S."/>
            <person name="Levy A."/>
            <person name="Martinka S."/>
            <person name="Mead K."/>
            <person name="McLellan M.D."/>
            <person name="Meyer R."/>
            <person name="Randall-Maher J."/>
            <person name="Tomlinson C."/>
            <person name="Dauphin-Kohlberg S."/>
            <person name="Kozlowicz-Reilly A."/>
            <person name="Shah N."/>
            <person name="Swearengen-Shahid S."/>
            <person name="Snider J."/>
            <person name="Strong J.T."/>
            <person name="Thompson J."/>
            <person name="Yoakum M."/>
            <person name="Leonard S."/>
            <person name="Pearman C."/>
            <person name="Trani L."/>
            <person name="Radionenko M."/>
            <person name="Waligorski J.E."/>
            <person name="Wang C."/>
            <person name="Rock S.M."/>
            <person name="Tin-Wollam A.-M."/>
            <person name="Maupin R."/>
            <person name="Latreille P."/>
            <person name="Wendl M.C."/>
            <person name="Yang S.-P."/>
            <person name="Pohl C."/>
            <person name="Wallis J.W."/>
            <person name="Spieth J."/>
            <person name="Bieri T.A."/>
            <person name="Berkowicz N."/>
            <person name="Nelson J.O."/>
            <person name="Osborne J."/>
            <person name="Ding L."/>
            <person name="Meyer R."/>
            <person name="Sabo A."/>
            <person name="Shotland Y."/>
            <person name="Sinha P."/>
            <person name="Wohldmann P.E."/>
            <person name="Cook L.L."/>
            <person name="Hickenbotham M.T."/>
            <person name="Eldred J."/>
            <person name="Williams D."/>
            <person name="Jones T.A."/>
            <person name="She X."/>
            <person name="Ciccarelli F.D."/>
            <person name="Izaurralde E."/>
            <person name="Taylor J."/>
            <person name="Schmutz J."/>
            <person name="Myers R.M."/>
            <person name="Cox D.R."/>
            <person name="Huang X."/>
            <person name="McPherson J.D."/>
            <person name="Mardis E.R."/>
            <person name="Clifton S.W."/>
            <person name="Warren W.C."/>
            <person name="Chinwalla A.T."/>
            <person name="Eddy S.R."/>
            <person name="Marra M.A."/>
            <person name="Ovcharenko I."/>
            <person name="Furey T.S."/>
            <person name="Miller W."/>
            <person name="Eichler E.E."/>
            <person name="Bork P."/>
            <person name="Suyama M."/>
            <person name="Torrents D."/>
            <person name="Waterston R.H."/>
            <person name="Wilson R.K."/>
        </authorList>
    </citation>
    <scope>NUCLEOTIDE SEQUENCE [LARGE SCALE GENOMIC DNA]</scope>
</reference>
<reference key="7">
    <citation type="submission" date="2005-09" db="EMBL/GenBank/DDBJ databases">
        <authorList>
            <person name="Mural R.J."/>
            <person name="Istrail S."/>
            <person name="Sutton G.G."/>
            <person name="Florea L."/>
            <person name="Halpern A.L."/>
            <person name="Mobarry C.M."/>
            <person name="Lippert R."/>
            <person name="Walenz B."/>
            <person name="Shatkay H."/>
            <person name="Dew I."/>
            <person name="Miller J.R."/>
            <person name="Flanigan M.J."/>
            <person name="Edwards N.J."/>
            <person name="Bolanos R."/>
            <person name="Fasulo D."/>
            <person name="Halldorsson B.V."/>
            <person name="Hannenhalli S."/>
            <person name="Turner R."/>
            <person name="Yooseph S."/>
            <person name="Lu F."/>
            <person name="Nusskern D.R."/>
            <person name="Shue B.C."/>
            <person name="Zheng X.H."/>
            <person name="Zhong F."/>
            <person name="Delcher A.L."/>
            <person name="Huson D.H."/>
            <person name="Kravitz S.A."/>
            <person name="Mouchard L."/>
            <person name="Reinert K."/>
            <person name="Remington K.A."/>
            <person name="Clark A.G."/>
            <person name="Waterman M.S."/>
            <person name="Eichler E.E."/>
            <person name="Adams M.D."/>
            <person name="Hunkapiller M.W."/>
            <person name="Myers E.W."/>
            <person name="Venter J.C."/>
        </authorList>
    </citation>
    <scope>NUCLEOTIDE SEQUENCE [LARGE SCALE GENOMIC DNA]</scope>
</reference>
<reference key="8">
    <citation type="journal article" date="2004" name="Genome Res.">
        <title>The status, quality, and expansion of the NIH full-length cDNA project: the Mammalian Gene Collection (MGC).</title>
        <authorList>
            <consortium name="The MGC Project Team"/>
        </authorList>
    </citation>
    <scope>NUCLEOTIDE SEQUENCE [LARGE SCALE MRNA] (ISOFORM B)</scope>
    <source>
        <tissue>Placenta</tissue>
    </source>
</reference>
<reference key="9">
    <citation type="journal article" date="2004" name="Protein Sci.">
        <title>Signal peptide prediction based on analysis of experimentally verified cleavage sites.</title>
        <authorList>
            <person name="Zhang Z."/>
            <person name="Henzel W.J."/>
        </authorList>
    </citation>
    <scope>PROTEIN SEQUENCE OF 19-33</scope>
</reference>
<reference key="10">
    <citation type="journal article" date="2001" name="Biochem. Biophys. Res. Commun.">
        <title>Tissue distribution and subcellular localization of a variant form of the human ST2 gene product, ST2V.</title>
        <authorList>
            <person name="Tago K."/>
            <person name="Noda T."/>
            <person name="Hayakawa M."/>
            <person name="Iwahana H."/>
            <person name="Yanagisawa K."/>
            <person name="Yashiro T."/>
            <person name="Tominaga S."/>
        </authorList>
    </citation>
    <scope>SUBCELLULAR LOCATION</scope>
    <scope>TISSUE SPECIFICITY</scope>
</reference>
<reference key="11">
    <citation type="journal article" date="2005" name="Immunity">
        <title>IL-33, an interleukin-1-like cytokine that signals via the IL-1 receptor-related protein ST 2 and induces T helper type 2-associated cytokines.</title>
        <authorList>
            <person name="Schmitz J."/>
            <person name="Owyang A."/>
            <person name="Oldham E."/>
            <person name="Song Y."/>
            <person name="Murphy E."/>
            <person name="McClanahan T.K."/>
            <person name="Zurawski G."/>
            <person name="Moshrefi M."/>
            <person name="Qin J."/>
            <person name="Li X."/>
            <person name="Gorman D.M."/>
            <person name="Bazan J.F."/>
            <person name="Kastelein R.A."/>
        </authorList>
    </citation>
    <scope>FUNCTION</scope>
    <scope>SUBUNIT</scope>
</reference>
<reference key="12">
    <citation type="journal article" date="2004" name="Genome Biol.">
        <title>An unappreciated role for RNA surveillance.</title>
        <authorList>
            <person name="Hillman R.T."/>
            <person name="Green R.E."/>
            <person name="Brenner S.E."/>
        </authorList>
    </citation>
    <scope>SPLICE ISOFORM(S) THAT ARE POTENTIAL NMD TARGET(S)</scope>
</reference>
<reference key="13">
    <citation type="journal article" date="2009" name="Structure">
        <title>Structure of IL-33 and its interaction with the ST2 and IL-1RAcP receptors--insight into heterotrimeric IL-1 signaling complexes.</title>
        <authorList>
            <person name="Lingel A."/>
            <person name="Weiss T.M."/>
            <person name="Niebuhr M."/>
            <person name="Pan B."/>
            <person name="Appleton B.A."/>
            <person name="Wiesmann C."/>
            <person name="Bazan J.F."/>
            <person name="Fairbrother W.J."/>
        </authorList>
    </citation>
    <scope>FUNCTION</scope>
    <scope>MODEL OF THE IL-33 SIGNALING COMPLEX</scope>
</reference>
<reference key="14">
    <citation type="journal article" date="2010" name="J. Cell. Mol. Med.">
        <title>Interleukin-33 overexpression is associated with liver fibrosis in mice and humans.</title>
        <authorList>
            <person name="Marvie P."/>
            <person name="Lisbonne M."/>
            <person name="L'helgoualc'h A."/>
            <person name="Rauch M."/>
            <person name="Turlin B."/>
            <person name="Preisser L."/>
            <person name="Bourd-Boittin K."/>
            <person name="Theret N."/>
            <person name="Gascan H."/>
            <person name="Piquet-Pellorce C."/>
            <person name="Samson M."/>
        </authorList>
    </citation>
    <scope>TISSUE SPECIFICITY</scope>
</reference>
<reference key="15">
    <citation type="journal article" date="2013" name="J. Biol. Chem.">
        <title>The GOLD domain-containing protein TMED1 is involved in interleukin-33 signaling.</title>
        <authorList>
            <person name="Connolly D.J."/>
            <person name="O'Neill L.A."/>
            <person name="McGettrick A.F."/>
        </authorList>
    </citation>
    <scope>INTERACTION WITH TMED1</scope>
</reference>
<reference key="16">
    <citation type="journal article" date="2022" name="Proc. Natl. Acad. Sci. U.S.A.">
        <title>Reciprocal regulation of IL-33 receptor-mediated inflammatory response and pulmonary fibrosis by TRAF6 and USP38.</title>
        <authorList>
            <person name="Yi X.M."/>
            <person name="Li M."/>
            <person name="Chen Y.D."/>
            <person name="Shu H.B."/>
            <person name="Li S."/>
        </authorList>
    </citation>
    <scope>UBIQUITINATION</scope>
    <scope>FUNCTION</scope>
</reference>
<reference key="17">
    <citation type="journal article" date="2013" name="Proc. Natl. Acad. Sci. U.S.A.">
        <title>Structural insights into the interaction of IL-33 with its receptors.</title>
        <authorList>
            <person name="Liu X."/>
            <person name="Hammel M."/>
            <person name="He Y."/>
            <person name="Tainer J.A."/>
            <person name="Jeng U.S."/>
            <person name="Zhang L."/>
            <person name="Wang S."/>
            <person name="Wang X."/>
        </authorList>
    </citation>
    <scope>X-RAY CRYSTALLOGRAPHY (3.27 ANGSTROMS) OF 19-321 IN COMPLEX WITH IL33</scope>
    <scope>GLYCOSYLATION AT ASN-95; ASN-140 AND ASN-191</scope>
    <scope>DISULFIDE BONDS</scope>
</reference>
<sequence>MGFWILAILTILMYSTAAKFSKQSWGLENEALIVRCPRQGKPSYTVDWYYSQTNKSIPTQERNRVFASGQLLKFLPAAVADSGIYTCIVRSPTFNRTGYANVTIYKKQSDCNVPDYLMYSTVSGSEKNSKIYCPTIDLYNWTAPLEWFKNCQALQGSRYRAHKSFLVIDNVMTEDAGDYTCKFIHNENGANYSVTATRSFTVKDEQGFSLFPVIGAPAQNEIKEVEIGKNANLTCSACFGKGTQFLAAVLWQLNGTKITDFGEPRIQQEEGQNQSFSNGLACLDMVLRIADVKEEDLLLQYDCLALNLHGLRRHTVRLSRKNPIDHHSIYCIIAVCSVFLMLINVLVIILKMFWIEATLLWRDIAKPYKTRNDGKLYDAYVVYPRNYKSSTDGASRVEHFVHQILPDVLENKCGYTLCIYGRDMLPGEDVVTAVETNIRKSRRHIFILTPQITHNKEFAYEQEVALHCALIQNDAKVILIEMEALSELDMLQAEALQDSLQHLMKVQGTIKWREDHIANKRSLNSKFWKHVRYQMPVPSKIPRKASSLTPLAAQKQ</sequence>
<proteinExistence type="evidence at protein level"/>
<protein>
    <recommendedName>
        <fullName>Interleukin-1 receptor-like 1</fullName>
        <ecNumber evidence="4">3.2.2.6</ecNumber>
    </recommendedName>
    <alternativeName>
        <fullName>Protein ST2</fullName>
    </alternativeName>
</protein>
<organism>
    <name type="scientific">Homo sapiens</name>
    <name type="common">Human</name>
    <dbReference type="NCBI Taxonomy" id="9606"/>
    <lineage>
        <taxon>Eukaryota</taxon>
        <taxon>Metazoa</taxon>
        <taxon>Chordata</taxon>
        <taxon>Craniata</taxon>
        <taxon>Vertebrata</taxon>
        <taxon>Euteleostomi</taxon>
        <taxon>Mammalia</taxon>
        <taxon>Eutheria</taxon>
        <taxon>Euarchontoglires</taxon>
        <taxon>Primates</taxon>
        <taxon>Haplorrhini</taxon>
        <taxon>Catarrhini</taxon>
        <taxon>Hominidae</taxon>
        <taxon>Homo</taxon>
    </lineage>
</organism>
<comment type="function">
    <text evidence="1 10 14 20">Receptor for interleukin-33 (IL-33) which plays crucial roles in innate and adaptive immunity, contributing to tissue homeostasis and responses to environmental stresses together with coreceptor IL1RAP (PubMed:35238669). Its stimulation recruits MYD88, IRAK1, IRAK4, and TRAF6, followed by phosphorylation of MAPK3/ERK1 and/or MAPK1/ERK2, MAPK14, and MAPK8. Possibly involved in helper T-cell function (Probable) (PubMed:16286016). Upon tissue injury, induces UCP2-dependent mitochondrial rewiring that attenuates the generation of reactive oxygen species and preserves the integrity of Krebs cycle required for persistent production of itaconate and subsequent GATA3-dependent differentiation of inflammation-resolving alternatively activated macrophages (By similarity).</text>
</comment>
<comment type="function">
    <molecule>Isoform B</molecule>
    <text evidence="1">Inhibits IL-33 signaling.</text>
</comment>
<comment type="catalytic activity">
    <reaction evidence="4">
        <text>NAD(+) + H2O = ADP-D-ribose + nicotinamide + H(+)</text>
        <dbReference type="Rhea" id="RHEA:16301"/>
        <dbReference type="ChEBI" id="CHEBI:15377"/>
        <dbReference type="ChEBI" id="CHEBI:15378"/>
        <dbReference type="ChEBI" id="CHEBI:17154"/>
        <dbReference type="ChEBI" id="CHEBI:57540"/>
        <dbReference type="ChEBI" id="CHEBI:57967"/>
        <dbReference type="EC" id="3.2.2.6"/>
    </reaction>
    <physiologicalReaction direction="left-to-right" evidence="4">
        <dbReference type="Rhea" id="RHEA:16302"/>
    </physiologicalReaction>
</comment>
<comment type="subunit">
    <text evidence="1 10 12 13 20">Interacts with MYD88, IRAK1, IRAK4, and TRAF6. Bound to its ligand IL-33, interacts with IL1RAP to form the minimal interleukin-33 signaling complex with a 1:1:1 stoichiometry. Interacts with KIT (bound to KITLG/SCF). A mast cell-specific KITLG/SCF-induced interleukin-33 signaling complex contains IL1RL1, IL1RAP, KIT and MYD88. Interacts with TMED1 (PubMed:23319592).</text>
</comment>
<comment type="interaction">
    <interactant intactId="EBI-993762">
        <id>Q01638</id>
    </interactant>
    <interactant intactId="EBI-3939278">
        <id>Q9BXN2</id>
        <label>CLEC7A</label>
    </interactant>
    <organismsDiffer>false</organismsDiffer>
    <experiments>3</experiments>
</comment>
<comment type="interaction">
    <interactant intactId="EBI-993762">
        <id>Q01638</id>
    </interactant>
    <interactant intactId="EBI-724057">
        <id>O95760</id>
        <label>IL33</label>
    </interactant>
    <organismsDiffer>false</organismsDiffer>
    <experiments>2</experiments>
</comment>
<comment type="interaction">
    <interactant intactId="EBI-12838366">
        <id>Q01638-2</id>
    </interactant>
    <interactant intactId="EBI-12808270">
        <id>P07307-3</id>
        <label>ASGR2</label>
    </interactant>
    <organismsDiffer>false</organismsDiffer>
    <experiments>3</experiments>
</comment>
<comment type="interaction">
    <interactant intactId="EBI-12838366">
        <id>Q01638-2</id>
    </interactant>
    <interactant intactId="EBI-12811991">
        <id>Q2HXU8-2</id>
        <label>CLEC12B</label>
    </interactant>
    <organismsDiffer>false</organismsDiffer>
    <experiments>3</experiments>
</comment>
<comment type="interaction">
    <interactant intactId="EBI-12838366">
        <id>Q01638-2</id>
    </interactant>
    <interactant intactId="EBI-11749983">
        <id>Q9UHP7-3</id>
        <label>CLEC2D</label>
    </interactant>
    <organismsDiffer>false</organismsDiffer>
    <experiments>3</experiments>
</comment>
<comment type="interaction">
    <interactant intactId="EBI-12838366">
        <id>Q01638-2</id>
    </interactant>
    <interactant intactId="EBI-6942903">
        <id>Q96BA8</id>
        <label>CREB3L1</label>
    </interactant>
    <organismsDiffer>false</organismsDiffer>
    <experiments>3</experiments>
</comment>
<comment type="interaction">
    <interactant intactId="EBI-12838366">
        <id>Q01638-2</id>
    </interactant>
    <interactant intactId="EBI-13345167">
        <id>Q8TDT2</id>
        <label>GPR152</label>
    </interactant>
    <organismsDiffer>false</organismsDiffer>
    <experiments>3</experiments>
</comment>
<comment type="interaction">
    <interactant intactId="EBI-12838366">
        <id>Q01638-2</id>
    </interactant>
    <interactant intactId="EBI-18076404">
        <id>O15529</id>
        <label>GPR42</label>
    </interactant>
    <organismsDiffer>false</organismsDiffer>
    <experiments>3</experiments>
</comment>
<comment type="interaction">
    <interactant intactId="EBI-12838366">
        <id>Q01638-2</id>
    </interactant>
    <interactant intactId="EBI-2689785">
        <id>Q8NI22</id>
        <label>MCFD2</label>
    </interactant>
    <organismsDiffer>false</organismsDiffer>
    <experiments>3</experiments>
</comment>
<comment type="interaction">
    <interactant intactId="EBI-12838366">
        <id>Q01638-2</id>
    </interactant>
    <interactant intactId="EBI-17640454">
        <id>Q96PQ1</id>
        <label>SIGLEC12</label>
    </interactant>
    <organismsDiffer>false</organismsDiffer>
    <experiments>3</experiments>
</comment>
<comment type="interaction">
    <interactant intactId="EBI-12838366">
        <id>Q01638-2</id>
    </interactant>
    <interactant intactId="EBI-9978441">
        <id>Q9H2H9</id>
        <label>SLC38A1</label>
    </interactant>
    <organismsDiffer>false</organismsDiffer>
    <experiments>3</experiments>
</comment>
<comment type="interaction">
    <interactant intactId="EBI-12838366">
        <id>Q01638-2</id>
    </interactant>
    <interactant intactId="EBI-17670824">
        <id>Q8WUV1</id>
        <label>TSPAN18</label>
    </interactant>
    <organismsDiffer>false</organismsDiffer>
    <experiments>3</experiments>
</comment>
<comment type="interaction">
    <interactant intactId="EBI-12838366">
        <id>Q01638-2</id>
    </interactant>
    <interactant intactId="EBI-751210">
        <id>Q96EC8</id>
        <label>YIPF6</label>
    </interactant>
    <organismsDiffer>false</organismsDiffer>
    <experiments>3</experiments>
</comment>
<comment type="subcellular location">
    <molecule>Isoform C</molecule>
    <subcellularLocation>
        <location>Cell membrane</location>
    </subcellularLocation>
</comment>
<comment type="subcellular location">
    <molecule>Isoform B</molecule>
    <subcellularLocation>
        <location>Secreted</location>
    </subcellularLocation>
</comment>
<comment type="subcellular location">
    <subcellularLocation>
        <location evidence="7">Cell membrane</location>
        <topology evidence="7">Single-pass type I membrane protein</topology>
    </subcellularLocation>
</comment>
<comment type="alternative products">
    <event type="alternative splicing"/>
    <isoform>
        <id>Q01638-1</id>
        <name>A</name>
        <name>ST2L</name>
        <sequence type="displayed"/>
    </isoform>
    <isoform>
        <id>Q01638-2</id>
        <name>B</name>
        <name>ST2S</name>
        <sequence type="described" ref="VSP_002666 VSP_002667"/>
    </isoform>
    <isoform>
        <id>Q01638-3</id>
        <name>C</name>
        <name>ST2V</name>
        <sequence type="described" ref="VSP_002664 VSP_002665"/>
    </isoform>
    <isoform>
        <id>Q01638-4</id>
        <name>4</name>
        <sequence type="described" ref="VSP_054933 VSP_002666 VSP_002667"/>
    </isoform>
</comment>
<comment type="tissue specificity">
    <text evidence="7 11">Highly expressed in kidney, lung, placenta, stomach, skeletal muscle, colon and small intestine. Isoform A is prevalently expressed in the lung, testis, placenta, stomach and colon. Isoform B is more abundant in the brain, kidney and the liver. Isoform C is not detected in brain, heart, liver, kidney and skeletal muscle. Expressed on T-cells in fibrotic liver; at protein level. Overexpressed in fibrotic and cirrhotic liver.</text>
</comment>
<comment type="domain">
    <text evidence="4">The TIR domain mediates NAD(+) hydrolase (NADase) activity. Self-association of TIR domains is required for NADase activity.</text>
</comment>
<comment type="PTM">
    <text evidence="1 14">Ubiquitinated at Lys-321 in a FBXL19-mediated manner; leading to proteasomal degradation. Ubiquitination by TRAF6 via 'Lys-27'-linked polyubiquitination and deubiquitination by USP38 serves as a critical regulatory mechanism for fine-tuning IL1RL1-mediated inflammatory response (PubMed:35238669).</text>
</comment>
<comment type="miscellaneous">
    <molecule>Isoform C</molecule>
    <text evidence="19">May be produced at very low levels due to a premature stop codon in the mRNA, leading to nonsense-mediated mRNA decay.</text>
</comment>
<comment type="similarity">
    <text evidence="19">Belongs to the interleukin-1 receptor family.</text>
</comment>
<keyword id="KW-0002">3D-structure</keyword>
<keyword id="KW-0025">Alternative splicing</keyword>
<keyword id="KW-1003">Cell membrane</keyword>
<keyword id="KW-0903">Direct protein sequencing</keyword>
<keyword id="KW-1015">Disulfide bond</keyword>
<keyword id="KW-0325">Glycoprotein</keyword>
<keyword id="KW-0378">Hydrolase</keyword>
<keyword id="KW-0393">Immunoglobulin domain</keyword>
<keyword id="KW-1017">Isopeptide bond</keyword>
<keyword id="KW-0472">Membrane</keyword>
<keyword id="KW-0520">NAD</keyword>
<keyword id="KW-1267">Proteomics identification</keyword>
<keyword id="KW-0675">Receptor</keyword>
<keyword id="KW-1185">Reference proteome</keyword>
<keyword id="KW-0677">Repeat</keyword>
<keyword id="KW-0964">Secreted</keyword>
<keyword id="KW-0732">Signal</keyword>
<keyword id="KW-0812">Transmembrane</keyword>
<keyword id="KW-1133">Transmembrane helix</keyword>
<keyword id="KW-0832">Ubl conjugation</keyword>